<reference key="1">
    <citation type="journal article" date="2000" name="DNA Res.">
        <title>Complete structure of the chloroplast genome of a legume, Lotus japonicus.</title>
        <authorList>
            <person name="Kato T."/>
            <person name="Kaneko T."/>
            <person name="Sato S."/>
            <person name="Nakamura Y."/>
            <person name="Tabata S."/>
        </authorList>
    </citation>
    <scope>NUCLEOTIDE SEQUENCE [LARGE SCALE GENOMIC DNA]</scope>
    <source>
        <strain>cv. Miyakojima MG-20</strain>
    </source>
</reference>
<comment type="subcellular location">
    <subcellularLocation>
        <location>Plastid</location>
        <location>Chloroplast</location>
    </subcellularLocation>
</comment>
<comment type="similarity">
    <text evidence="1">Belongs to the bacterial ribosomal protein bL33 family.</text>
</comment>
<name>RK33_LOTJA</name>
<accession>Q9BBR2</accession>
<protein>
    <recommendedName>
        <fullName evidence="1">Large ribosomal subunit protein bL33c</fullName>
    </recommendedName>
    <alternativeName>
        <fullName evidence="2">50S ribosomal protein L33, chloroplastic</fullName>
    </alternativeName>
</protein>
<evidence type="ECO:0000255" key="1">
    <source>
        <dbReference type="HAMAP-Rule" id="MF_00294"/>
    </source>
</evidence>
<evidence type="ECO:0000305" key="2"/>
<proteinExistence type="inferred from homology"/>
<dbReference type="EMBL" id="AP002983">
    <property type="protein sequence ID" value="BAB33217.1"/>
    <property type="molecule type" value="Genomic_DNA"/>
</dbReference>
<dbReference type="RefSeq" id="NP_084819.1">
    <property type="nucleotide sequence ID" value="NC_002694.1"/>
</dbReference>
<dbReference type="GeneID" id="802937"/>
<dbReference type="GO" id="GO:0009507">
    <property type="term" value="C:chloroplast"/>
    <property type="evidence" value="ECO:0007669"/>
    <property type="project" value="UniProtKB-SubCell"/>
</dbReference>
<dbReference type="GO" id="GO:1990904">
    <property type="term" value="C:ribonucleoprotein complex"/>
    <property type="evidence" value="ECO:0007669"/>
    <property type="project" value="UniProtKB-KW"/>
</dbReference>
<dbReference type="GO" id="GO:0005840">
    <property type="term" value="C:ribosome"/>
    <property type="evidence" value="ECO:0007669"/>
    <property type="project" value="UniProtKB-KW"/>
</dbReference>
<dbReference type="GO" id="GO:0003735">
    <property type="term" value="F:structural constituent of ribosome"/>
    <property type="evidence" value="ECO:0007669"/>
    <property type="project" value="InterPro"/>
</dbReference>
<dbReference type="GO" id="GO:0006412">
    <property type="term" value="P:translation"/>
    <property type="evidence" value="ECO:0007669"/>
    <property type="project" value="UniProtKB-UniRule"/>
</dbReference>
<dbReference type="Gene3D" id="2.20.28.120">
    <property type="entry name" value="Ribosomal protein L33"/>
    <property type="match status" value="1"/>
</dbReference>
<dbReference type="HAMAP" id="MF_00294">
    <property type="entry name" value="Ribosomal_bL33"/>
    <property type="match status" value="1"/>
</dbReference>
<dbReference type="InterPro" id="IPR001705">
    <property type="entry name" value="Ribosomal_bL33"/>
</dbReference>
<dbReference type="InterPro" id="IPR018264">
    <property type="entry name" value="Ribosomal_bL33_CS"/>
</dbReference>
<dbReference type="InterPro" id="IPR038584">
    <property type="entry name" value="Ribosomal_bL33_sf"/>
</dbReference>
<dbReference type="InterPro" id="IPR011332">
    <property type="entry name" value="Ribosomal_zn-bd"/>
</dbReference>
<dbReference type="NCBIfam" id="NF001764">
    <property type="entry name" value="PRK00504.1"/>
    <property type="match status" value="1"/>
</dbReference>
<dbReference type="NCBIfam" id="NF001860">
    <property type="entry name" value="PRK00595.1"/>
    <property type="match status" value="1"/>
</dbReference>
<dbReference type="NCBIfam" id="TIGR01023">
    <property type="entry name" value="rpmG_bact"/>
    <property type="match status" value="1"/>
</dbReference>
<dbReference type="PANTHER" id="PTHR43168">
    <property type="entry name" value="50S RIBOSOMAL PROTEIN L33, CHLOROPLASTIC"/>
    <property type="match status" value="1"/>
</dbReference>
<dbReference type="PANTHER" id="PTHR43168:SF2">
    <property type="entry name" value="LARGE RIBOSOMAL SUBUNIT PROTEIN BL33C"/>
    <property type="match status" value="1"/>
</dbReference>
<dbReference type="Pfam" id="PF00471">
    <property type="entry name" value="Ribosomal_L33"/>
    <property type="match status" value="1"/>
</dbReference>
<dbReference type="SUPFAM" id="SSF57829">
    <property type="entry name" value="Zn-binding ribosomal proteins"/>
    <property type="match status" value="1"/>
</dbReference>
<dbReference type="PROSITE" id="PS00582">
    <property type="entry name" value="RIBOSOMAL_L33"/>
    <property type="match status" value="1"/>
</dbReference>
<gene>
    <name evidence="1" type="primary">rpl33</name>
</gene>
<feature type="chain" id="PRO_0000170285" description="Large ribosomal subunit protein bL33c">
    <location>
        <begin position="1"/>
        <end position="66"/>
    </location>
</feature>
<organism>
    <name type="scientific">Lotus japonicus</name>
    <name type="common">Lotus corniculatus var. japonicus</name>
    <dbReference type="NCBI Taxonomy" id="34305"/>
    <lineage>
        <taxon>Eukaryota</taxon>
        <taxon>Viridiplantae</taxon>
        <taxon>Streptophyta</taxon>
        <taxon>Embryophyta</taxon>
        <taxon>Tracheophyta</taxon>
        <taxon>Spermatophyta</taxon>
        <taxon>Magnoliopsida</taxon>
        <taxon>eudicotyledons</taxon>
        <taxon>Gunneridae</taxon>
        <taxon>Pentapetalae</taxon>
        <taxon>rosids</taxon>
        <taxon>fabids</taxon>
        <taxon>Fabales</taxon>
        <taxon>Fabaceae</taxon>
        <taxon>Papilionoideae</taxon>
        <taxon>50 kb inversion clade</taxon>
        <taxon>NPAAA clade</taxon>
        <taxon>Hologalegina</taxon>
        <taxon>robinioid clade</taxon>
        <taxon>Loteae</taxon>
        <taxon>Lotus</taxon>
    </lineage>
</organism>
<sequence>MAKGKDIRIIVILECTGCDQKSVNKESSGISRYITQKNRHNTPSRLELIKFCPCCRKHMIHAEIKK</sequence>
<geneLocation type="chloroplast"/>
<keyword id="KW-0150">Chloroplast</keyword>
<keyword id="KW-0934">Plastid</keyword>
<keyword id="KW-0687">Ribonucleoprotein</keyword>
<keyword id="KW-0689">Ribosomal protein</keyword>